<name>RHOC_EMENI</name>
<dbReference type="EMBL" id="AACD01000047">
    <property type="protein sequence ID" value="EAA63089.1"/>
    <property type="molecule type" value="Genomic_DNA"/>
</dbReference>
<dbReference type="EMBL" id="AF379682">
    <property type="protein sequence ID" value="AAK55443.1"/>
    <property type="molecule type" value="Genomic_DNA"/>
</dbReference>
<dbReference type="EMBL" id="BN001306">
    <property type="protein sequence ID" value="CBF84210.1"/>
    <property type="molecule type" value="Genomic_DNA"/>
</dbReference>
<dbReference type="RefSeq" id="XP_660291.1">
    <property type="nucleotide sequence ID" value="XM_655199.1"/>
</dbReference>
<dbReference type="SMR" id="Q96WY0"/>
<dbReference type="STRING" id="227321.Q96WY0"/>
<dbReference type="EnsemblFungi" id="CBF84210">
    <property type="protein sequence ID" value="CBF84210"/>
    <property type="gene ID" value="ANIA_02687"/>
</dbReference>
<dbReference type="KEGG" id="ani:ANIA_02687"/>
<dbReference type="VEuPathDB" id="FungiDB:AN2687"/>
<dbReference type="eggNOG" id="KOG0393">
    <property type="taxonomic scope" value="Eukaryota"/>
</dbReference>
<dbReference type="HOGENOM" id="CLU_041217_21_1_1"/>
<dbReference type="InParanoid" id="Q96WY0"/>
<dbReference type="OMA" id="RTKRTCI"/>
<dbReference type="OrthoDB" id="8830751at2759"/>
<dbReference type="Proteomes" id="UP000000560">
    <property type="component" value="Chromosome VI"/>
</dbReference>
<dbReference type="GO" id="GO:0005938">
    <property type="term" value="C:cell cortex"/>
    <property type="evidence" value="ECO:0007669"/>
    <property type="project" value="EnsemblFungi"/>
</dbReference>
<dbReference type="GO" id="GO:0005829">
    <property type="term" value="C:cytosol"/>
    <property type="evidence" value="ECO:0000318"/>
    <property type="project" value="GO_Central"/>
</dbReference>
<dbReference type="GO" id="GO:0000935">
    <property type="term" value="C:division septum"/>
    <property type="evidence" value="ECO:0007669"/>
    <property type="project" value="EnsemblFungi"/>
</dbReference>
<dbReference type="GO" id="GO:0005886">
    <property type="term" value="C:plasma membrane"/>
    <property type="evidence" value="ECO:0000318"/>
    <property type="project" value="GO_Central"/>
</dbReference>
<dbReference type="GO" id="GO:0005525">
    <property type="term" value="F:GTP binding"/>
    <property type="evidence" value="ECO:0000318"/>
    <property type="project" value="GO_Central"/>
</dbReference>
<dbReference type="GO" id="GO:0003924">
    <property type="term" value="F:GTPase activity"/>
    <property type="evidence" value="ECO:0000318"/>
    <property type="project" value="GO_Central"/>
</dbReference>
<dbReference type="GO" id="GO:0019901">
    <property type="term" value="F:protein kinase binding"/>
    <property type="evidence" value="ECO:0000318"/>
    <property type="project" value="GO_Central"/>
</dbReference>
<dbReference type="GO" id="GO:0007015">
    <property type="term" value="P:actin filament organization"/>
    <property type="evidence" value="ECO:0000318"/>
    <property type="project" value="GO_Central"/>
</dbReference>
<dbReference type="GO" id="GO:0000915">
    <property type="term" value="P:actomyosin contractile ring assembly"/>
    <property type="evidence" value="ECO:0000315"/>
    <property type="project" value="AspGD"/>
</dbReference>
<dbReference type="GO" id="GO:0000917">
    <property type="term" value="P:division septum assembly"/>
    <property type="evidence" value="ECO:0007669"/>
    <property type="project" value="EnsemblFungi"/>
</dbReference>
<dbReference type="GO" id="GO:0032956">
    <property type="term" value="P:regulation of actin cytoskeleton organization"/>
    <property type="evidence" value="ECO:0000318"/>
    <property type="project" value="GO_Central"/>
</dbReference>
<dbReference type="GO" id="GO:0031991">
    <property type="term" value="P:regulation of actomyosin contractile ring contraction"/>
    <property type="evidence" value="ECO:0000315"/>
    <property type="project" value="AspGD"/>
</dbReference>
<dbReference type="GO" id="GO:0007165">
    <property type="term" value="P:signal transduction"/>
    <property type="evidence" value="ECO:0000318"/>
    <property type="project" value="GO_Central"/>
</dbReference>
<dbReference type="GO" id="GO:0007264">
    <property type="term" value="P:small GTPase-mediated signal transduction"/>
    <property type="evidence" value="ECO:0007669"/>
    <property type="project" value="InterPro"/>
</dbReference>
<dbReference type="CDD" id="cd04132">
    <property type="entry name" value="Rho4_like"/>
    <property type="match status" value="1"/>
</dbReference>
<dbReference type="FunFam" id="3.40.50.300:FF:000678">
    <property type="entry name" value="Rho GTPase Rho4"/>
    <property type="match status" value="1"/>
</dbReference>
<dbReference type="Gene3D" id="3.40.50.300">
    <property type="entry name" value="P-loop containing nucleotide triphosphate hydrolases"/>
    <property type="match status" value="1"/>
</dbReference>
<dbReference type="InterPro" id="IPR027417">
    <property type="entry name" value="P-loop_NTPase"/>
</dbReference>
<dbReference type="InterPro" id="IPR005225">
    <property type="entry name" value="Small_GTP-bd"/>
</dbReference>
<dbReference type="InterPro" id="IPR001806">
    <property type="entry name" value="Small_GTPase"/>
</dbReference>
<dbReference type="InterPro" id="IPR003578">
    <property type="entry name" value="Small_GTPase_Rho"/>
</dbReference>
<dbReference type="NCBIfam" id="TIGR00231">
    <property type="entry name" value="small_GTP"/>
    <property type="match status" value="1"/>
</dbReference>
<dbReference type="PANTHER" id="PTHR24072">
    <property type="entry name" value="RHO FAMILY GTPASE"/>
    <property type="match status" value="1"/>
</dbReference>
<dbReference type="Pfam" id="PF00071">
    <property type="entry name" value="Ras"/>
    <property type="match status" value="1"/>
</dbReference>
<dbReference type="PRINTS" id="PR00449">
    <property type="entry name" value="RASTRNSFRMNG"/>
</dbReference>
<dbReference type="SMART" id="SM00175">
    <property type="entry name" value="RAB"/>
    <property type="match status" value="1"/>
</dbReference>
<dbReference type="SMART" id="SM00173">
    <property type="entry name" value="RAS"/>
    <property type="match status" value="1"/>
</dbReference>
<dbReference type="SMART" id="SM00174">
    <property type="entry name" value="RHO"/>
    <property type="match status" value="1"/>
</dbReference>
<dbReference type="SUPFAM" id="SSF52540">
    <property type="entry name" value="P-loop containing nucleoside triphosphate hydrolases"/>
    <property type="match status" value="1"/>
</dbReference>
<dbReference type="PROSITE" id="PS51420">
    <property type="entry name" value="RHO"/>
    <property type="match status" value="1"/>
</dbReference>
<organism>
    <name type="scientific">Emericella nidulans (strain FGSC A4 / ATCC 38163 / CBS 112.46 / NRRL 194 / M139)</name>
    <name type="common">Aspergillus nidulans</name>
    <dbReference type="NCBI Taxonomy" id="227321"/>
    <lineage>
        <taxon>Eukaryota</taxon>
        <taxon>Fungi</taxon>
        <taxon>Dikarya</taxon>
        <taxon>Ascomycota</taxon>
        <taxon>Pezizomycotina</taxon>
        <taxon>Eurotiomycetes</taxon>
        <taxon>Eurotiomycetidae</taxon>
        <taxon>Eurotiales</taxon>
        <taxon>Aspergillaceae</taxon>
        <taxon>Aspergillus</taxon>
        <taxon>Aspergillus subgen. Nidulantes</taxon>
    </lineage>
</organism>
<reference key="1">
    <citation type="journal article" date="2005" name="Nature">
        <title>Sequencing of Aspergillus nidulans and comparative analysis with A. fumigatus and A. oryzae.</title>
        <authorList>
            <person name="Galagan J.E."/>
            <person name="Calvo S.E."/>
            <person name="Cuomo C."/>
            <person name="Ma L.-J."/>
            <person name="Wortman J.R."/>
            <person name="Batzoglou S."/>
            <person name="Lee S.-I."/>
            <person name="Bastuerkmen M."/>
            <person name="Spevak C.C."/>
            <person name="Clutterbuck J."/>
            <person name="Kapitonov V."/>
            <person name="Jurka J."/>
            <person name="Scazzocchio C."/>
            <person name="Farman M.L."/>
            <person name="Butler J."/>
            <person name="Purcell S."/>
            <person name="Harris S."/>
            <person name="Braus G.H."/>
            <person name="Draht O."/>
            <person name="Busch S."/>
            <person name="D'Enfert C."/>
            <person name="Bouchier C."/>
            <person name="Goldman G.H."/>
            <person name="Bell-Pedersen D."/>
            <person name="Griffiths-Jones S."/>
            <person name="Doonan J.H."/>
            <person name="Yu J."/>
            <person name="Vienken K."/>
            <person name="Pain A."/>
            <person name="Freitag M."/>
            <person name="Selker E.U."/>
            <person name="Archer D.B."/>
            <person name="Penalva M.A."/>
            <person name="Oakley B.R."/>
            <person name="Momany M."/>
            <person name="Tanaka T."/>
            <person name="Kumagai T."/>
            <person name="Asai K."/>
            <person name="Machida M."/>
            <person name="Nierman W.C."/>
            <person name="Denning D.W."/>
            <person name="Caddick M.X."/>
            <person name="Hynes M."/>
            <person name="Paoletti M."/>
            <person name="Fischer R."/>
            <person name="Miller B.L."/>
            <person name="Dyer P.S."/>
            <person name="Sachs M.S."/>
            <person name="Osmani S.A."/>
            <person name="Birren B.W."/>
        </authorList>
    </citation>
    <scope>NUCLEOTIDE SEQUENCE [LARGE SCALE GENOMIC DNA]</scope>
    <source>
        <strain>FGSC A4 / ATCC 38163 / CBS 112.46 / NRRL 194 / M139</strain>
    </source>
</reference>
<reference key="2">
    <citation type="journal article" date="2009" name="Fungal Genet. Biol.">
        <title>The 2008 update of the Aspergillus nidulans genome annotation: a community effort.</title>
        <authorList>
            <person name="Wortman J.R."/>
            <person name="Gilsenan J.M."/>
            <person name="Joardar V."/>
            <person name="Deegan J."/>
            <person name="Clutterbuck J."/>
            <person name="Andersen M.R."/>
            <person name="Archer D."/>
            <person name="Bencina M."/>
            <person name="Braus G."/>
            <person name="Coutinho P."/>
            <person name="von Dohren H."/>
            <person name="Doonan J."/>
            <person name="Driessen A.J."/>
            <person name="Durek P."/>
            <person name="Espeso E."/>
            <person name="Fekete E."/>
            <person name="Flipphi M."/>
            <person name="Estrada C.G."/>
            <person name="Geysens S."/>
            <person name="Goldman G."/>
            <person name="de Groot P.W."/>
            <person name="Hansen K."/>
            <person name="Harris S.D."/>
            <person name="Heinekamp T."/>
            <person name="Helmstaedt K."/>
            <person name="Henrissat B."/>
            <person name="Hofmann G."/>
            <person name="Homan T."/>
            <person name="Horio T."/>
            <person name="Horiuchi H."/>
            <person name="James S."/>
            <person name="Jones M."/>
            <person name="Karaffa L."/>
            <person name="Karanyi Z."/>
            <person name="Kato M."/>
            <person name="Keller N."/>
            <person name="Kelly D.E."/>
            <person name="Kiel J.A."/>
            <person name="Kim J.M."/>
            <person name="van der Klei I.J."/>
            <person name="Klis F.M."/>
            <person name="Kovalchuk A."/>
            <person name="Krasevec N."/>
            <person name="Kubicek C.P."/>
            <person name="Liu B."/>
            <person name="Maccabe A."/>
            <person name="Meyer V."/>
            <person name="Mirabito P."/>
            <person name="Miskei M."/>
            <person name="Mos M."/>
            <person name="Mullins J."/>
            <person name="Nelson D.R."/>
            <person name="Nielsen J."/>
            <person name="Oakley B.R."/>
            <person name="Osmani S.A."/>
            <person name="Pakula T."/>
            <person name="Paszewski A."/>
            <person name="Paulsen I."/>
            <person name="Pilsyk S."/>
            <person name="Pocsi I."/>
            <person name="Punt P.J."/>
            <person name="Ram A.F."/>
            <person name="Ren Q."/>
            <person name="Robellet X."/>
            <person name="Robson G."/>
            <person name="Seiboth B."/>
            <person name="van Solingen P."/>
            <person name="Specht T."/>
            <person name="Sun J."/>
            <person name="Taheri-Talesh N."/>
            <person name="Takeshita N."/>
            <person name="Ussery D."/>
            <person name="vanKuyk P.A."/>
            <person name="Visser H."/>
            <person name="van de Vondervoort P.J."/>
            <person name="de Vries R.P."/>
            <person name="Walton J."/>
            <person name="Xiang X."/>
            <person name="Xiong Y."/>
            <person name="Zeng A.P."/>
            <person name="Brandt B.W."/>
            <person name="Cornell M.J."/>
            <person name="van den Hondel C.A."/>
            <person name="Visser J."/>
            <person name="Oliver S.G."/>
            <person name="Turner G."/>
        </authorList>
    </citation>
    <scope>GENOME REANNOTATION</scope>
    <source>
        <strain>FGSC A4 / ATCC 38163 / CBS 112.46 / NRRL 194 / M139</strain>
    </source>
</reference>
<reference key="3">
    <citation type="submission" date="2001-05" db="EMBL/GenBank/DDBJ databases">
        <authorList>
            <person name="Guest G.M."/>
            <person name="Momany M."/>
        </authorList>
    </citation>
    <scope>NUCLEOTIDE SEQUENCE [GENOMIC DNA] OF 51-280</scope>
</reference>
<comment type="subcellular location">
    <subcellularLocation>
        <location evidence="3">Cell membrane</location>
        <topology evidence="3">Lipid-anchor</topology>
        <orientation evidence="3">Cytoplasmic side</orientation>
    </subcellularLocation>
</comment>
<comment type="similarity">
    <text evidence="3">Belongs to the small GTPase superfamily. Rho family.</text>
</comment>
<evidence type="ECO:0000250" key="1"/>
<evidence type="ECO:0000256" key="2">
    <source>
        <dbReference type="SAM" id="MobiDB-lite"/>
    </source>
</evidence>
<evidence type="ECO:0000305" key="3"/>
<gene>
    <name type="primary">rhoC</name>
    <name type="ORF">AN2687</name>
</gene>
<keyword id="KW-1003">Cell membrane</keyword>
<keyword id="KW-0342">GTP-binding</keyword>
<keyword id="KW-0449">Lipoprotein</keyword>
<keyword id="KW-0472">Membrane</keyword>
<keyword id="KW-0488">Methylation</keyword>
<keyword id="KW-0547">Nucleotide-binding</keyword>
<keyword id="KW-0636">Prenylation</keyword>
<keyword id="KW-1185">Reference proteome</keyword>
<protein>
    <recommendedName>
        <fullName>GTP-binding protein rhoC</fullName>
    </recommendedName>
    <alternativeName>
        <fullName>Rho3 protein homolog</fullName>
    </alternativeName>
</protein>
<proteinExistence type="inferred from homology"/>
<sequence length="280" mass="31039">MSGSMYDDQYYATSRRHSLVTPPPSVAPRQNRMRSQSVRVSNGTVSTDNSMSSGRVSEATNITQPPAYSKKFVVVGDGGCGKTCLLISYSQGYFPEKYVPTVFENYITQTLHRRSGKTVELALWDTAGQEEYDRLRPLSYPETDLLFVCFAIDCPASLENVMDKWYPEVLHFCPTTPIILVGLKSDLRNKRTCIELLKTQGLTPVTPEQGQAVAGRMNASYVECSSKEMRGVDSVFQLAVDTVVSLEEQNWDTRLPSSSGKPGGKPIGGKKIKKRSCKIL</sequence>
<feature type="chain" id="PRO_0000198937" description="GTP-binding protein rhoC">
    <location>
        <begin position="1"/>
        <end position="277"/>
    </location>
</feature>
<feature type="propeptide" id="PRO_0000281267" description="Removed in mature form" evidence="1">
    <location>
        <begin position="278"/>
        <end position="280"/>
    </location>
</feature>
<feature type="region of interest" description="Disordered" evidence="2">
    <location>
        <begin position="13"/>
        <end position="59"/>
    </location>
</feature>
<feature type="region of interest" description="Disordered" evidence="2">
    <location>
        <begin position="251"/>
        <end position="275"/>
    </location>
</feature>
<feature type="short sequence motif" description="Effector region" evidence="1">
    <location>
        <begin position="98"/>
        <end position="106"/>
    </location>
</feature>
<feature type="compositionally biased region" description="Polar residues" evidence="2">
    <location>
        <begin position="33"/>
        <end position="59"/>
    </location>
</feature>
<feature type="binding site" evidence="1">
    <location>
        <begin position="76"/>
        <end position="83"/>
    </location>
    <ligand>
        <name>GTP</name>
        <dbReference type="ChEBI" id="CHEBI:37565"/>
    </ligand>
</feature>
<feature type="binding site" evidence="1">
    <location>
        <begin position="125"/>
        <end position="129"/>
    </location>
    <ligand>
        <name>GTP</name>
        <dbReference type="ChEBI" id="CHEBI:37565"/>
    </ligand>
</feature>
<feature type="binding site" evidence="1">
    <location>
        <begin position="183"/>
        <end position="186"/>
    </location>
    <ligand>
        <name>GTP</name>
        <dbReference type="ChEBI" id="CHEBI:37565"/>
    </ligand>
</feature>
<feature type="modified residue" description="Cysteine methyl ester" evidence="1">
    <location>
        <position position="277"/>
    </location>
</feature>
<feature type="lipid moiety-binding region" description="S-geranylgeranyl cysteine" evidence="1">
    <location>
        <position position="277"/>
    </location>
</feature>
<accession>Q96WY0</accession>
<accession>C8VKD2</accession>
<accession>Q5B9U3</accession>